<organism evidence="13">
    <name type="scientific">Euglena gracilis</name>
    <dbReference type="NCBI Taxonomy" id="3039"/>
    <lineage>
        <taxon>Eukaryota</taxon>
        <taxon>Discoba</taxon>
        <taxon>Euglenozoa</taxon>
        <taxon>Euglenida</taxon>
        <taxon>Spirocuta</taxon>
        <taxon>Euglenophyceae</taxon>
        <taxon>Euglenales</taxon>
        <taxon>Euglenaceae</taxon>
        <taxon>Euglena</taxon>
    </lineage>
</organism>
<accession>Q94IN5</accession>
<accession>Q9FZP8</accession>
<comment type="function">
    <text evidence="7 9">Pyruvate dehydrogenase [NADP(+)] is one of three enzymes participating in respiratory metabolism. The enzyme is also active with 2-oxobutyrate and oxaloacetate. The enzyme is oxygen sensitive.</text>
</comment>
<comment type="catalytic activity">
    <reaction evidence="9">
        <text>pyruvate + NADP(+) + CoA = acetyl-CoA + CO2 + NADPH</text>
        <dbReference type="Rhea" id="RHEA:17425"/>
        <dbReference type="ChEBI" id="CHEBI:15361"/>
        <dbReference type="ChEBI" id="CHEBI:16526"/>
        <dbReference type="ChEBI" id="CHEBI:57287"/>
        <dbReference type="ChEBI" id="CHEBI:57288"/>
        <dbReference type="ChEBI" id="CHEBI:57783"/>
        <dbReference type="ChEBI" id="CHEBI:58349"/>
        <dbReference type="EC" id="1.2.1.51"/>
    </reaction>
</comment>
<comment type="cofactor">
    <cofactor evidence="7">
        <name>FAD</name>
        <dbReference type="ChEBI" id="CHEBI:57692"/>
    </cofactor>
    <text evidence="7">Binds 1 FAD per subunit.</text>
</comment>
<comment type="cofactor">
    <cofactor evidence="7">
        <name>FMN</name>
        <dbReference type="ChEBI" id="CHEBI:58210"/>
    </cofactor>
    <text evidence="7">Binds 1 FMN per subunit.</text>
</comment>
<comment type="cofactor">
    <cofactor evidence="7">
        <name>thiamine diphosphate</name>
        <dbReference type="ChEBI" id="CHEBI:58937"/>
    </cofactor>
</comment>
<comment type="cofactor">
    <cofactor evidence="9">
        <name>iron-sulfur cluster</name>
        <dbReference type="ChEBI" id="CHEBI:30408"/>
    </cofactor>
</comment>
<comment type="biophysicochemical properties">
    <kinetics>
        <KM evidence="9">210 uM for pyruvate</KM>
        <KM evidence="9">8 uM for CoA</KM>
        <KM evidence="9">30 uM for NADP(+)</KM>
    </kinetics>
    <phDependence>
        <text evidence="9">Optimum pH is 7.5.</text>
    </phDependence>
    <temperatureDependence>
        <text evidence="9">Optimum temperature is 40 degrees Celsius.</text>
    </temperatureDependence>
</comment>
<comment type="subunit">
    <text evidence="7 9">Homodimer.</text>
</comment>
<comment type="subcellular location">
    <subcellularLocation>
        <location evidence="6 7">Mitochondrion</location>
    </subcellularLocation>
</comment>
<comment type="induction">
    <text>Expressed in both aerobic and anaerobic conditions.</text>
</comment>
<comment type="miscellaneous">
    <text evidence="10 11">Arose from gene fusion of pyruvate:ferredoxin oxidoreductase and cytochrome-P450 reductase. Gene fusion has only been found in Euglena and Cryptosporidium.</text>
</comment>
<comment type="miscellaneous">
    <text evidence="7">Euglena cells absolutely require thiamine for growth due to the lack of a pyrimidine formation biosynthetic pathway. Thiamine is actively taken up into the cells and is used as a cofactor after being converted to TPP (thiamine pyrophosphate).</text>
</comment>
<comment type="similarity">
    <text evidence="12">In the N-terminal section; belongs to the pyruvate:ferredoxin/flavodoxin oxidoreductase family.</text>
</comment>
<sequence>MKQSVRPIISNVLRKEVALYSTIIGQDKGKEPTGRTYTSGPKPASHIEVPHHVTVPATDRTPNPDAQFFQSVDGSQATSHVAYALSDTAFIYPITPSSVMGELADVWMAQGRKNAFGQVVDVREMQSEAGAAGALHGALAAGAIATTFTASQGLLLMIPNMYKIAGELMPSVIHVAARELAGHALSIFGGHADVMAVRQTGWAMLCSHTVQQSHDMALISHVATLKSSIPFVHFFDGFRTSHEVNKIKMLPYAELKKLVPPGTMEQHWARSLNPMHPTIRGTNQSADIYFQNMESANQYYTDLAEVVQETMDEVAPYIGRHYKIFEYVGAPDAEEVTVLMGSGATTVNEAVDLLVKRGKKVGAVLVHLYRPWSTKAFEKVLPKTVKRIAALDRCKEVTALGEPLYLDVSATLNLFPERQNVKVIGGRYGLGSKDFIPEHALAIYANLASENPIQRFTVGITDDVTGTSVPFVNERVDTLPEGTRQCVFWGIGSDGTVGANRSAVRIIGDNSDLMVQAYFQFDAFKSGGVTSSHLRFGPKPITAQYLVTNADYIACHFQEYVKRFDMLDAIREGGTFVLNSRWTTEDMEKEIPADFRRNVAQKKVRFYNVDARKICDSFGLGKRINMLMQACFFKLSGVLPLAEAQRLLNESIVHEYGKKGGKVVEMNQAVVNAVFAGDLPQEVQVPAAWANAVDTSTRTPTGIEFVDKIMRPLMDFKGDQLPVSVMTPGGTFPVGTTQYAKRAIAAFIPQWIPANCTQCNYCSYVCPHATIRPFVLTDQEVQLAPESFVTRKAKGDYQGMNFRIQVAPEDCTGCQVCVETCPDDALEMTDAFTATPVQRTNWEFAIKVPNRGTMTDRYSLKGSQFQQPLLEFSGACEGCGETPYVKLLTQLFGERTVIANATGCSSIWGGTAGLAPYTTNAKGQGPAWGNSLFEDNAEFGFGIAVANAQKRSRVRDCILQAVEKKVADEGLTTLLAQWLQDWNTGDKTLKYQDQIIAGLAQQRSKDPLLEQIYGMKDMLPNISQWIIGGDGWANDIGFGGLDHVLASGQNLNVLVLDTEMYSNTGGQASKSTHMASVAKFALGGKRTNKKNLTEMAMSYGNVYVATVSHGNMAQCVKAFVEAESYDGPSLIVGYAPCIEHGLRAGMARMVQESEAAIATGYWPLYRFDPRLATEGKNPFQLDSKRIKGNLQEYLDRQNRYVNLKKNNPKGADLLKSQMADNITARFNRYRRMLEGPNTKAAAPSGNHVTILYGSETGNSEGLAKELATDFERREYSVAVQALDDIDVADLENMGFVVIAVSTCGQGQFPRNSQLFWRELQRDKPEGWLKNLKYTVFGLGDSTYYFYCHTAKQIDARLAALGAQRVVPIGFGDDGDEDMFHTGFNNWIPSVWNELKTKTPEEALFTPSIAVQLTPNATPQDFHFAKSTPVLSITGAERITPADHTRNFVTIRWKTDLSYQVGDSLGVFPENTRSVVEEFLQYYGLNPKDVITIENKGSRELPHCMAVGDLFTKVLDILGKPNNRFYKTLSYFAVDKAEKERLLKIAEMGPEYSNILSEMYHYADIFHMFPSARPTLQYLIEMIPNIKPRYYSISSAPIHTPGEVHSLVLIDTWITLSGKHRTGLTCTMLEHLQAGQVVDGCIHPTAMEFPDHEKPVVMCAMGSGLAPFVAFLRERSTLRKQGKKTGNMALYFGNRYEKTEFLMKEELKGHINDGLLTLRCAFSRDDPKKKVYVQDLIKMDEKMMYDYLVVQKGSMYCCGSRSFIKPVQESLKHCFMKAGGLTAEQAENEVIDMFTTGRYNIEAW</sequence>
<keyword id="KW-0004">4Fe-4S</keyword>
<keyword id="KW-0903">Direct protein sequencing</keyword>
<keyword id="KW-0249">Electron transport</keyword>
<keyword id="KW-0274">FAD</keyword>
<keyword id="KW-0285">Flavoprotein</keyword>
<keyword id="KW-0288">FMN</keyword>
<keyword id="KW-0408">Iron</keyword>
<keyword id="KW-0411">Iron-sulfur</keyword>
<keyword id="KW-0479">Metal-binding</keyword>
<keyword id="KW-0496">Mitochondrion</keyword>
<keyword id="KW-0521">NADP</keyword>
<keyword id="KW-0560">Oxidoreductase</keyword>
<keyword id="KW-0677">Repeat</keyword>
<keyword id="KW-0786">Thiamine pyrophosphate</keyword>
<keyword id="KW-0809">Transit peptide</keyword>
<keyword id="KW-0813">Transport</keyword>
<feature type="transit peptide" description="Mitochondrion" evidence="8">
    <location>
        <begin position="1"/>
        <end position="37"/>
    </location>
</feature>
<feature type="chain" id="PRO_0000023867" description="Pyruvate dehydrogenase [NADP(+)], mitochondrial">
    <location>
        <begin position="38"/>
        <end position="1803"/>
    </location>
</feature>
<feature type="domain" description="4Fe-4S ferredoxin-type 1" evidence="4">
    <location>
        <begin position="747"/>
        <end position="776"/>
    </location>
</feature>
<feature type="domain" description="4Fe-4S ferredoxin-type 2" evidence="4">
    <location>
        <begin position="802"/>
        <end position="831"/>
    </location>
</feature>
<feature type="domain" description="Flavodoxin-like" evidence="3">
    <location>
        <begin position="1248"/>
        <end position="1391"/>
    </location>
</feature>
<feature type="domain" description="FAD-binding FR-type" evidence="5">
    <location>
        <begin position="1425"/>
        <end position="1650"/>
    </location>
</feature>
<feature type="binding site" evidence="2">
    <location>
        <position position="756"/>
    </location>
    <ligand>
        <name>[4Fe-4S] cluster</name>
        <dbReference type="ChEBI" id="CHEBI:49883"/>
        <label>1</label>
    </ligand>
</feature>
<feature type="binding site" evidence="2">
    <location>
        <position position="759"/>
    </location>
    <ligand>
        <name>[4Fe-4S] cluster</name>
        <dbReference type="ChEBI" id="CHEBI:49883"/>
        <label>1</label>
    </ligand>
</feature>
<feature type="binding site" evidence="2">
    <location>
        <position position="762"/>
    </location>
    <ligand>
        <name>[4Fe-4S] cluster</name>
        <dbReference type="ChEBI" id="CHEBI:49883"/>
        <label>1</label>
    </ligand>
</feature>
<feature type="binding site" evidence="2">
    <location>
        <position position="766"/>
    </location>
    <ligand>
        <name>[4Fe-4S] cluster</name>
        <dbReference type="ChEBI" id="CHEBI:49883"/>
        <label>1</label>
    </ligand>
</feature>
<feature type="binding site" evidence="2">
    <location>
        <position position="811"/>
    </location>
    <ligand>
        <name>[4Fe-4S] cluster</name>
        <dbReference type="ChEBI" id="CHEBI:49883"/>
        <label>2</label>
    </ligand>
</feature>
<feature type="binding site" evidence="2">
    <location>
        <position position="814"/>
    </location>
    <ligand>
        <name>[4Fe-4S] cluster</name>
        <dbReference type="ChEBI" id="CHEBI:49883"/>
        <label>2</label>
    </ligand>
</feature>
<feature type="binding site" evidence="2">
    <location>
        <position position="817"/>
    </location>
    <ligand>
        <name>[4Fe-4S] cluster</name>
        <dbReference type="ChEBI" id="CHEBI:49883"/>
        <label>2</label>
    </ligand>
</feature>
<feature type="binding site" evidence="2">
    <location>
        <position position="821"/>
    </location>
    <ligand>
        <name>[4Fe-4S] cluster</name>
        <dbReference type="ChEBI" id="CHEBI:49883"/>
        <label>2</label>
    </ligand>
</feature>
<feature type="binding site" evidence="1">
    <location>
        <begin position="1458"/>
        <end position="1469"/>
    </location>
    <ligand>
        <name>FAD</name>
        <dbReference type="ChEBI" id="CHEBI:57692"/>
    </ligand>
</feature>
<feature type="binding site" evidence="1">
    <location>
        <begin position="1585"/>
        <end position="1595"/>
    </location>
    <ligand>
        <name>FAD</name>
        <dbReference type="ChEBI" id="CHEBI:57692"/>
    </ligand>
</feature>
<feature type="sequence conflict" description="In Ref. 3; AA sequence." evidence="12" ref="3">
    <original>P</original>
    <variation>S</variation>
    <location>
        <position position="50"/>
    </location>
</feature>
<feature type="sequence conflict" description="In Ref. 3; AA sequence." evidence="12" ref="3">
    <original>H</original>
    <variation>A</variation>
    <location>
        <position position="52"/>
    </location>
</feature>
<feature type="sequence conflict" description="In Ref. 3; AA sequence." evidence="12" ref="3">
    <original>V</original>
    <variation>K</variation>
    <location>
        <position position="53"/>
    </location>
</feature>
<feature type="sequence conflict" description="In Ref. 1; BAB12024." evidence="12" ref="1">
    <original>NV</original>
    <variation>KL</variation>
    <location>
        <begin position="598"/>
        <end position="599"/>
    </location>
</feature>
<feature type="sequence conflict" description="In Ref. 3; AA sequence." evidence="12" ref="3">
    <original>T</original>
    <variation>E</variation>
    <location>
        <position position="1256"/>
    </location>
</feature>
<feature type="sequence conflict" description="In Ref. 1; BAB12024." evidence="12" ref="1">
    <original>M</original>
    <variation>T</variation>
    <location>
        <position position="1558"/>
    </location>
</feature>
<feature type="sequence conflict" description="In Ref. 1; BAB12024." evidence="12" ref="1">
    <original>ER</original>
    <variation>DG</variation>
    <location>
        <begin position="1673"/>
        <end position="1674"/>
    </location>
</feature>
<evidence type="ECO:0000250" key="1"/>
<evidence type="ECO:0000255" key="2"/>
<evidence type="ECO:0000255" key="3">
    <source>
        <dbReference type="PROSITE-ProRule" id="PRU00088"/>
    </source>
</evidence>
<evidence type="ECO:0000255" key="4">
    <source>
        <dbReference type="PROSITE-ProRule" id="PRU00711"/>
    </source>
</evidence>
<evidence type="ECO:0000255" key="5">
    <source>
        <dbReference type="PROSITE-ProRule" id="PRU00716"/>
    </source>
</evidence>
<evidence type="ECO:0000269" key="6">
    <source>
    </source>
</evidence>
<evidence type="ECO:0000269" key="7">
    <source>
    </source>
</evidence>
<evidence type="ECO:0000269" key="8">
    <source>
    </source>
</evidence>
<evidence type="ECO:0000269" key="9">
    <source>
    </source>
</evidence>
<evidence type="ECO:0000303" key="10">
    <source>
    </source>
</evidence>
<evidence type="ECO:0000303" key="11">
    <source>
    </source>
</evidence>
<evidence type="ECO:0000305" key="12"/>
<evidence type="ECO:0000312" key="13">
    <source>
        <dbReference type="EMBL" id="CAC37628.1"/>
    </source>
</evidence>
<reference key="1">
    <citation type="journal article" date="2000" name="FEBS Lett.">
        <title>The origin of pyruvate:NADP+ oxidoreductase in mitochondria of Euglena gracilis.</title>
        <authorList>
            <person name="Nakazawa M."/>
            <person name="Inui H."/>
            <person name="Yamaji R."/>
            <person name="Yamamoto T."/>
            <person name="Takenaka S."/>
            <person name="Ueda M."/>
            <person name="Nakano Y."/>
            <person name="Miyatake K."/>
        </authorList>
    </citation>
    <scope>NUCLEOTIDE SEQUENCE [MRNA]</scope>
</reference>
<reference key="2">
    <citation type="journal article" date="2001" name="Mol. Biol. Evol.">
        <title>Pyruvate: NADP oxidoreductase from the mitochondrion of Euglena gracilis and from the apicomplexan Cryptosporidium parvum: a biochemical relic linking pyruvate metabolism in mitochondriate and amitochondriate protists.</title>
        <authorList>
            <person name="Rotte C."/>
            <person name="Stejskal F."/>
            <person name="Zhu G."/>
            <person name="Keithly J.S."/>
            <person name="Martin W."/>
        </authorList>
    </citation>
    <scope>NUCLEOTIDE SEQUENCE [MRNA]</scope>
    <scope>SUBCELLULAR LOCATION</scope>
    <scope>TISSUE SPECIFICITY</scope>
    <source>
        <strain>SAG1224-5/25</strain>
    </source>
</reference>
<reference key="3">
    <citation type="journal article" date="1991" name="Arch. Biochem. Biophys.">
        <title>Pyruvate:NADP+ oxidoreductase from Euglena gracilis: limited proteolysis of the enzyme with trypsin.</title>
        <authorList>
            <person name="Inui H."/>
            <person name="Yamaji R."/>
            <person name="Saidoh H."/>
            <person name="Miyatake K."/>
            <person name="Nakano Y."/>
            <person name="Kitaoka S."/>
        </authorList>
    </citation>
    <scope>PROTEIN SEQUENCE OF 38-53 AND 1240-1259</scope>
</reference>
<reference key="4">
    <citation type="journal article" date="1993" name="Arch. Biochem. Biophys.">
        <title>Characterization of aquacobalamin reductase (NADPH) from Euglena gracilis.</title>
        <authorList>
            <person name="Watanabe F."/>
            <person name="Yamaji R."/>
            <person name="Isegawa Y."/>
            <person name="Yamamoto T."/>
            <person name="Tamura Y."/>
            <person name="Nakano Y."/>
        </authorList>
    </citation>
    <scope>PROTEIN SEQUENCE OF 1240-1255</scope>
    <scope>FUNCTION</scope>
    <scope>CHARACTERIZATION</scope>
</reference>
<reference key="5">
    <citation type="journal article" date="1987" name="J. Biol. Chem.">
        <title>Purification and characterization of pyruvate:NADP+ oxidoreductase in Euglena gracilis.</title>
        <authorList>
            <person name="Inui H."/>
            <person name="Ono K."/>
            <person name="Miyatake K."/>
            <person name="Nakano Y."/>
            <person name="Kitaoka S."/>
        </authorList>
    </citation>
    <scope>FUNCTION</scope>
    <scope>CATALYTIC ACTIVITY</scope>
    <scope>SUBUNIT</scope>
    <scope>COFACTOR</scope>
    <scope>BIOPHYSICOCHEMICAL PROPERTIES</scope>
    <scope>SUBSTRATE SPECIFICITY</scope>
</reference>
<reference key="6">
    <citation type="journal article" date="2003" name="Arch. Biochem. Biophys.">
        <title>Pyruvate:NADP(+) oxidoreductase is stabilized by its cofactor, thiamin pyrophosphate, in mitochondria of Euglena gracilis.</title>
        <authorList>
            <person name="Nakazawa M."/>
            <person name="Takenaka S."/>
            <person name="Ueda M."/>
            <person name="Inui H."/>
            <person name="Nakano Y."/>
            <person name="Miyatake K."/>
        </authorList>
    </citation>
    <scope>FUNCTION</scope>
    <scope>COFACTOR</scope>
    <scope>SUBUNIT</scope>
    <scope>SUBCELLULAR LOCATION</scope>
</reference>
<proteinExistence type="evidence at protein level"/>
<gene>
    <name type="primary">PNO</name>
</gene>
<dbReference type="EC" id="1.2.1.51" evidence="9"/>
<dbReference type="EMBL" id="AB021127">
    <property type="protein sequence ID" value="BAB12024.1"/>
    <property type="molecule type" value="mRNA"/>
</dbReference>
<dbReference type="EMBL" id="AJ278425">
    <property type="protein sequence ID" value="CAC37628.1"/>
    <property type="molecule type" value="mRNA"/>
</dbReference>
<dbReference type="PIR" id="S36876">
    <property type="entry name" value="S36876"/>
</dbReference>
<dbReference type="SMR" id="Q94IN5"/>
<dbReference type="KEGG" id="ag:BAB12024"/>
<dbReference type="BioCyc" id="MetaCyc:MONOMER-17049"/>
<dbReference type="BRENDA" id="1.2.1.51">
    <property type="organism ID" value="2197"/>
</dbReference>
<dbReference type="SABIO-RK" id="Q94IN5"/>
<dbReference type="GO" id="GO:0005739">
    <property type="term" value="C:mitochondrion"/>
    <property type="evidence" value="ECO:0000314"/>
    <property type="project" value="UniProtKB"/>
</dbReference>
<dbReference type="GO" id="GO:0051539">
    <property type="term" value="F:4 iron, 4 sulfur cluster binding"/>
    <property type="evidence" value="ECO:0007669"/>
    <property type="project" value="UniProtKB-KW"/>
</dbReference>
<dbReference type="GO" id="GO:0010181">
    <property type="term" value="F:FMN binding"/>
    <property type="evidence" value="ECO:0007669"/>
    <property type="project" value="InterPro"/>
</dbReference>
<dbReference type="GO" id="GO:0005506">
    <property type="term" value="F:iron ion binding"/>
    <property type="evidence" value="ECO:0007669"/>
    <property type="project" value="InterPro"/>
</dbReference>
<dbReference type="GO" id="GO:0016491">
    <property type="term" value="F:oxidoreductase activity"/>
    <property type="evidence" value="ECO:0000314"/>
    <property type="project" value="UniProtKB"/>
</dbReference>
<dbReference type="GO" id="GO:0050243">
    <property type="term" value="F:pyruvate dehydrogenase (NADP+) activity"/>
    <property type="evidence" value="ECO:0007669"/>
    <property type="project" value="UniProtKB-EC"/>
</dbReference>
<dbReference type="GO" id="GO:0045333">
    <property type="term" value="P:cellular respiration"/>
    <property type="evidence" value="ECO:0000314"/>
    <property type="project" value="UniProtKB"/>
</dbReference>
<dbReference type="GO" id="GO:0022900">
    <property type="term" value="P:electron transport chain"/>
    <property type="evidence" value="ECO:0007669"/>
    <property type="project" value="InterPro"/>
</dbReference>
<dbReference type="GO" id="GO:0006090">
    <property type="term" value="P:pyruvate metabolic process"/>
    <property type="evidence" value="ECO:0000314"/>
    <property type="project" value="UniProtKB"/>
</dbReference>
<dbReference type="GO" id="GO:0006979">
    <property type="term" value="P:response to oxidative stress"/>
    <property type="evidence" value="ECO:0007669"/>
    <property type="project" value="TreeGrafter"/>
</dbReference>
<dbReference type="CDD" id="cd06207">
    <property type="entry name" value="CyPoR_like"/>
    <property type="match status" value="1"/>
</dbReference>
<dbReference type="CDD" id="cd03377">
    <property type="entry name" value="TPP_PFOR_PNO"/>
    <property type="match status" value="1"/>
</dbReference>
<dbReference type="CDD" id="cd07034">
    <property type="entry name" value="TPP_PYR_PFOR_IOR-alpha_like"/>
    <property type="match status" value="1"/>
</dbReference>
<dbReference type="FunFam" id="3.40.50.80:FF:000085">
    <property type="entry name" value="Iron-uptake factor"/>
    <property type="match status" value="1"/>
</dbReference>
<dbReference type="FunFam" id="3.30.70.20:FF:000022">
    <property type="entry name" value="Pyruvate:ferredoxin (Flavodoxin) oxidoreductase"/>
    <property type="match status" value="1"/>
</dbReference>
<dbReference type="FunFam" id="3.40.50.920:FF:000007">
    <property type="entry name" value="Pyruvate:ferredoxin (Flavodoxin) oxidoreductase"/>
    <property type="match status" value="1"/>
</dbReference>
<dbReference type="FunFam" id="3.40.50.970:FF:000012">
    <property type="entry name" value="Pyruvate:ferredoxin (Flavodoxin) oxidoreductase"/>
    <property type="match status" value="1"/>
</dbReference>
<dbReference type="FunFam" id="3.40.50.970:FF:000041">
    <property type="entry name" value="Pyruvate:ferredoxin (Flavodoxin) oxidoreductase"/>
    <property type="match status" value="1"/>
</dbReference>
<dbReference type="FunFam" id="3.40.920.10:FF:000001">
    <property type="entry name" value="Pyruvate:ferredoxin (Flavodoxin) oxidoreductase"/>
    <property type="match status" value="1"/>
</dbReference>
<dbReference type="FunFam" id="1.20.990.10:FF:000010">
    <property type="entry name" value="Sulfite reductase [NADPH] flavoprotein component"/>
    <property type="match status" value="1"/>
</dbReference>
<dbReference type="Gene3D" id="3.30.70.20">
    <property type="match status" value="1"/>
</dbReference>
<dbReference type="Gene3D" id="3.40.50.360">
    <property type="match status" value="1"/>
</dbReference>
<dbReference type="Gene3D" id="3.40.50.920">
    <property type="match status" value="1"/>
</dbReference>
<dbReference type="Gene3D" id="3.40.50.970">
    <property type="match status" value="2"/>
</dbReference>
<dbReference type="Gene3D" id="1.20.990.10">
    <property type="entry name" value="NADPH-cytochrome p450 Reductase, Chain A, domain 3"/>
    <property type="match status" value="1"/>
</dbReference>
<dbReference type="Gene3D" id="3.40.50.80">
    <property type="entry name" value="Nucleotide-binding domain of ferredoxin-NADP reductase (FNR) module"/>
    <property type="match status" value="1"/>
</dbReference>
<dbReference type="Gene3D" id="3.40.920.10">
    <property type="entry name" value="Pyruvate-ferredoxin oxidoreductase, PFOR, domain III"/>
    <property type="match status" value="1"/>
</dbReference>
<dbReference type="Gene3D" id="4.10.780.10">
    <property type="entry name" value="Pyruvate-flavodoxin oxidoreductase, EKR domain"/>
    <property type="match status" value="1"/>
</dbReference>
<dbReference type="Gene3D" id="2.40.30.10">
    <property type="entry name" value="Translation factors"/>
    <property type="match status" value="1"/>
</dbReference>
<dbReference type="InterPro" id="IPR017896">
    <property type="entry name" value="4Fe4S_Fe-S-bd"/>
</dbReference>
<dbReference type="InterPro" id="IPR017900">
    <property type="entry name" value="4Fe4S_Fe_S_CS"/>
</dbReference>
<dbReference type="InterPro" id="IPR003097">
    <property type="entry name" value="CysJ-like_FAD-binding"/>
</dbReference>
<dbReference type="InterPro" id="IPR017927">
    <property type="entry name" value="FAD-bd_FR_type"/>
</dbReference>
<dbReference type="InterPro" id="IPR001094">
    <property type="entry name" value="Flavdoxin-like"/>
</dbReference>
<dbReference type="InterPro" id="IPR008254">
    <property type="entry name" value="Flavodoxin/NO_synth"/>
</dbReference>
<dbReference type="InterPro" id="IPR001709">
    <property type="entry name" value="Flavoprot_Pyr_Nucl_cyt_Rdtase"/>
</dbReference>
<dbReference type="InterPro" id="IPR029039">
    <property type="entry name" value="Flavoprotein-like_sf"/>
</dbReference>
<dbReference type="InterPro" id="IPR039261">
    <property type="entry name" value="FNR_nucleotide-bd"/>
</dbReference>
<dbReference type="InterPro" id="IPR023173">
    <property type="entry name" value="NADPH_Cyt_P450_Rdtase_alpha"/>
</dbReference>
<dbReference type="InterPro" id="IPR001433">
    <property type="entry name" value="OxRdtase_FAD/NAD-bd"/>
</dbReference>
<dbReference type="InterPro" id="IPR033412">
    <property type="entry name" value="PFOR_II"/>
</dbReference>
<dbReference type="InterPro" id="IPR050722">
    <property type="entry name" value="Pyruvate:ferred/Flavod_OxRd"/>
</dbReference>
<dbReference type="InterPro" id="IPR037112">
    <property type="entry name" value="Pyrv-flavodox_OxR_EKR_sf"/>
</dbReference>
<dbReference type="InterPro" id="IPR019456">
    <property type="entry name" value="Pyrv-flavodox_OxRtase_EKR"/>
</dbReference>
<dbReference type="InterPro" id="IPR019752">
    <property type="entry name" value="Pyrv/ketoisovalerate_OxRed_cat"/>
</dbReference>
<dbReference type="InterPro" id="IPR002880">
    <property type="entry name" value="Pyrv_Fd/Flavodoxin_OxRdtase_N"/>
</dbReference>
<dbReference type="InterPro" id="IPR011895">
    <property type="entry name" value="Pyrv_flavodox_OxRed"/>
</dbReference>
<dbReference type="InterPro" id="IPR002869">
    <property type="entry name" value="Pyrv_flavodox_OxRed_cen"/>
</dbReference>
<dbReference type="InterPro" id="IPR017938">
    <property type="entry name" value="Riboflavin_synthase-like_b-brl"/>
</dbReference>
<dbReference type="InterPro" id="IPR029061">
    <property type="entry name" value="THDP-binding"/>
</dbReference>
<dbReference type="InterPro" id="IPR009014">
    <property type="entry name" value="Transketo_C/PFOR_II"/>
</dbReference>
<dbReference type="NCBIfam" id="TIGR02176">
    <property type="entry name" value="pyruv_ox_red"/>
    <property type="match status" value="1"/>
</dbReference>
<dbReference type="PANTHER" id="PTHR32154">
    <property type="entry name" value="PYRUVATE-FLAVODOXIN OXIDOREDUCTASE-RELATED"/>
    <property type="match status" value="1"/>
</dbReference>
<dbReference type="PANTHER" id="PTHR32154:SF0">
    <property type="entry name" value="PYRUVATE-FLAVODOXIN OXIDOREDUCTASE-RELATED"/>
    <property type="match status" value="1"/>
</dbReference>
<dbReference type="Pfam" id="PF10371">
    <property type="entry name" value="EKR"/>
    <property type="match status" value="1"/>
</dbReference>
<dbReference type="Pfam" id="PF00667">
    <property type="entry name" value="FAD_binding_1"/>
    <property type="match status" value="1"/>
</dbReference>
<dbReference type="Pfam" id="PF12838">
    <property type="entry name" value="Fer4_7"/>
    <property type="match status" value="1"/>
</dbReference>
<dbReference type="Pfam" id="PF00258">
    <property type="entry name" value="Flavodoxin_1"/>
    <property type="match status" value="1"/>
</dbReference>
<dbReference type="Pfam" id="PF00175">
    <property type="entry name" value="NAD_binding_1"/>
    <property type="match status" value="1"/>
</dbReference>
<dbReference type="Pfam" id="PF17147">
    <property type="entry name" value="PFOR_II"/>
    <property type="match status" value="1"/>
</dbReference>
<dbReference type="Pfam" id="PF01558">
    <property type="entry name" value="POR"/>
    <property type="match status" value="1"/>
</dbReference>
<dbReference type="Pfam" id="PF01855">
    <property type="entry name" value="POR_N"/>
    <property type="match status" value="1"/>
</dbReference>
<dbReference type="PRINTS" id="PR00369">
    <property type="entry name" value="FLAVODOXIN"/>
</dbReference>
<dbReference type="PRINTS" id="PR00371">
    <property type="entry name" value="FPNCR"/>
</dbReference>
<dbReference type="SMART" id="SM00890">
    <property type="entry name" value="EKR"/>
    <property type="match status" value="1"/>
</dbReference>
<dbReference type="SUPFAM" id="SSF54862">
    <property type="entry name" value="4Fe-4S ferredoxins"/>
    <property type="match status" value="1"/>
</dbReference>
<dbReference type="SUPFAM" id="SSF52343">
    <property type="entry name" value="Ferredoxin reductase-like, C-terminal NADP-linked domain"/>
    <property type="match status" value="1"/>
</dbReference>
<dbReference type="SUPFAM" id="SSF52218">
    <property type="entry name" value="Flavoproteins"/>
    <property type="match status" value="1"/>
</dbReference>
<dbReference type="SUPFAM" id="SSF53323">
    <property type="entry name" value="Pyruvate-ferredoxin oxidoreductase, PFOR, domain III"/>
    <property type="match status" value="1"/>
</dbReference>
<dbReference type="SUPFAM" id="SSF63380">
    <property type="entry name" value="Riboflavin synthase domain-like"/>
    <property type="match status" value="1"/>
</dbReference>
<dbReference type="SUPFAM" id="SSF52518">
    <property type="entry name" value="Thiamin diphosphate-binding fold (THDP-binding)"/>
    <property type="match status" value="2"/>
</dbReference>
<dbReference type="SUPFAM" id="SSF52922">
    <property type="entry name" value="TK C-terminal domain-like"/>
    <property type="match status" value="1"/>
</dbReference>
<dbReference type="PROSITE" id="PS00198">
    <property type="entry name" value="4FE4S_FER_1"/>
    <property type="match status" value="2"/>
</dbReference>
<dbReference type="PROSITE" id="PS51379">
    <property type="entry name" value="4FE4S_FER_2"/>
    <property type="match status" value="2"/>
</dbReference>
<dbReference type="PROSITE" id="PS51384">
    <property type="entry name" value="FAD_FR"/>
    <property type="match status" value="1"/>
</dbReference>
<dbReference type="PROSITE" id="PS50902">
    <property type="entry name" value="FLAVODOXIN_LIKE"/>
    <property type="match status" value="1"/>
</dbReference>
<protein>
    <recommendedName>
        <fullName>Pyruvate dehydrogenase [NADP(+)], mitochondrial</fullName>
        <ecNumber evidence="9">1.2.1.51</ecNumber>
    </recommendedName>
    <alternativeName>
        <fullName>Aquacobalamin reductase [NADPH]</fullName>
    </alternativeName>
    <alternativeName>
        <fullName>EgPNOmt</fullName>
    </alternativeName>
    <alternativeName>
        <fullName>Pyruvate:NADP(+) oxidoreductase</fullName>
    </alternativeName>
</protein>
<name>PNO_EUGGR</name>